<dbReference type="EC" id="6.3.4.2" evidence="1"/>
<dbReference type="EMBL" id="CP000698">
    <property type="protein sequence ID" value="ABQ27151.1"/>
    <property type="molecule type" value="Genomic_DNA"/>
</dbReference>
<dbReference type="RefSeq" id="WP_011939820.1">
    <property type="nucleotide sequence ID" value="NC_009483.1"/>
</dbReference>
<dbReference type="SMR" id="A5G5T3"/>
<dbReference type="STRING" id="351605.Gura_2979"/>
<dbReference type="KEGG" id="gur:Gura_2979"/>
<dbReference type="HOGENOM" id="CLU_011675_5_0_7"/>
<dbReference type="OrthoDB" id="9801107at2"/>
<dbReference type="UniPathway" id="UPA00159">
    <property type="reaction ID" value="UER00277"/>
</dbReference>
<dbReference type="Proteomes" id="UP000006695">
    <property type="component" value="Chromosome"/>
</dbReference>
<dbReference type="GO" id="GO:0005829">
    <property type="term" value="C:cytosol"/>
    <property type="evidence" value="ECO:0007669"/>
    <property type="project" value="TreeGrafter"/>
</dbReference>
<dbReference type="GO" id="GO:0005524">
    <property type="term" value="F:ATP binding"/>
    <property type="evidence" value="ECO:0007669"/>
    <property type="project" value="UniProtKB-KW"/>
</dbReference>
<dbReference type="GO" id="GO:0003883">
    <property type="term" value="F:CTP synthase activity"/>
    <property type="evidence" value="ECO:0007669"/>
    <property type="project" value="UniProtKB-UniRule"/>
</dbReference>
<dbReference type="GO" id="GO:0004359">
    <property type="term" value="F:glutaminase activity"/>
    <property type="evidence" value="ECO:0007669"/>
    <property type="project" value="RHEA"/>
</dbReference>
<dbReference type="GO" id="GO:0042802">
    <property type="term" value="F:identical protein binding"/>
    <property type="evidence" value="ECO:0007669"/>
    <property type="project" value="TreeGrafter"/>
</dbReference>
<dbReference type="GO" id="GO:0046872">
    <property type="term" value="F:metal ion binding"/>
    <property type="evidence" value="ECO:0007669"/>
    <property type="project" value="UniProtKB-KW"/>
</dbReference>
<dbReference type="GO" id="GO:0044210">
    <property type="term" value="P:'de novo' CTP biosynthetic process"/>
    <property type="evidence" value="ECO:0007669"/>
    <property type="project" value="UniProtKB-UniRule"/>
</dbReference>
<dbReference type="GO" id="GO:0019856">
    <property type="term" value="P:pyrimidine nucleobase biosynthetic process"/>
    <property type="evidence" value="ECO:0007669"/>
    <property type="project" value="TreeGrafter"/>
</dbReference>
<dbReference type="CDD" id="cd03113">
    <property type="entry name" value="CTPS_N"/>
    <property type="match status" value="1"/>
</dbReference>
<dbReference type="CDD" id="cd01746">
    <property type="entry name" value="GATase1_CTP_Synthase"/>
    <property type="match status" value="1"/>
</dbReference>
<dbReference type="FunFam" id="3.40.50.300:FF:000009">
    <property type="entry name" value="CTP synthase"/>
    <property type="match status" value="1"/>
</dbReference>
<dbReference type="FunFam" id="3.40.50.880:FF:000002">
    <property type="entry name" value="CTP synthase"/>
    <property type="match status" value="1"/>
</dbReference>
<dbReference type="Gene3D" id="3.40.50.880">
    <property type="match status" value="1"/>
</dbReference>
<dbReference type="Gene3D" id="3.40.50.300">
    <property type="entry name" value="P-loop containing nucleotide triphosphate hydrolases"/>
    <property type="match status" value="1"/>
</dbReference>
<dbReference type="HAMAP" id="MF_01227">
    <property type="entry name" value="PyrG"/>
    <property type="match status" value="1"/>
</dbReference>
<dbReference type="InterPro" id="IPR029062">
    <property type="entry name" value="Class_I_gatase-like"/>
</dbReference>
<dbReference type="InterPro" id="IPR004468">
    <property type="entry name" value="CTP_synthase"/>
</dbReference>
<dbReference type="InterPro" id="IPR017456">
    <property type="entry name" value="CTP_synthase_N"/>
</dbReference>
<dbReference type="InterPro" id="IPR017926">
    <property type="entry name" value="GATASE"/>
</dbReference>
<dbReference type="InterPro" id="IPR033828">
    <property type="entry name" value="GATase1_CTP_Synthase"/>
</dbReference>
<dbReference type="InterPro" id="IPR027417">
    <property type="entry name" value="P-loop_NTPase"/>
</dbReference>
<dbReference type="NCBIfam" id="NF003792">
    <property type="entry name" value="PRK05380.1"/>
    <property type="match status" value="1"/>
</dbReference>
<dbReference type="NCBIfam" id="TIGR00337">
    <property type="entry name" value="PyrG"/>
    <property type="match status" value="1"/>
</dbReference>
<dbReference type="PANTHER" id="PTHR11550">
    <property type="entry name" value="CTP SYNTHASE"/>
    <property type="match status" value="1"/>
</dbReference>
<dbReference type="PANTHER" id="PTHR11550:SF0">
    <property type="entry name" value="CTP SYNTHASE-RELATED"/>
    <property type="match status" value="1"/>
</dbReference>
<dbReference type="Pfam" id="PF06418">
    <property type="entry name" value="CTP_synth_N"/>
    <property type="match status" value="1"/>
</dbReference>
<dbReference type="Pfam" id="PF00117">
    <property type="entry name" value="GATase"/>
    <property type="match status" value="1"/>
</dbReference>
<dbReference type="SUPFAM" id="SSF52317">
    <property type="entry name" value="Class I glutamine amidotransferase-like"/>
    <property type="match status" value="1"/>
</dbReference>
<dbReference type="SUPFAM" id="SSF52540">
    <property type="entry name" value="P-loop containing nucleoside triphosphate hydrolases"/>
    <property type="match status" value="1"/>
</dbReference>
<dbReference type="PROSITE" id="PS51273">
    <property type="entry name" value="GATASE_TYPE_1"/>
    <property type="match status" value="1"/>
</dbReference>
<name>PYRG_GEOUR</name>
<sequence length="534" mass="59153">MKTKFIFVTGGVVSSIGKGLAAASLGALLEARGLRVTHQKLDPYINVDPGTMSPFQHGEVFVTDDGAETDLDLGHYERYTSARLSKKSNFTTGQVYFSVIEKERRGDYLGGTVQVIPHITDEIKSKILDNAKGSDIAIIEIGGTVGDIESLPFLEAIRQFKADRGAGNVLYLHVTLVPFIKTADELKTKPTQHSVKELREIGIQPDILLCRCEQDLPREMKAKIALFCNVEEKAVITSMDAEHIYAVPLALHKEGLDEQVVEKLNIWAKAPDLTPWQQVVDKLMHPGHGKVRIAIVGKYVNLTESYKSLAEALTHGGIANDCRVHLSYLDSEKIEQEGIDGLLDGVDGILVPGGFGERGTEGKIKAIEYARTRKIPFFGICLGMQMAVVEYARNVCHLDDAFSSEFKQDCANPIIHLMEEQKGVSRKGGTMRLGAYPCTLAKGSFAQKAYGTLDISERHRHRYEFNNDYRDLLVSNGLILSGIYKEGDLVEIVEIPDHPWFVGCQFHPEFKSKPLNPHPLFRAFIAAALHNIKA</sequence>
<accession>A5G5T3</accession>
<protein>
    <recommendedName>
        <fullName evidence="1">CTP synthase</fullName>
        <ecNumber evidence="1">6.3.4.2</ecNumber>
    </recommendedName>
    <alternativeName>
        <fullName evidence="1">Cytidine 5'-triphosphate synthase</fullName>
    </alternativeName>
    <alternativeName>
        <fullName evidence="1">Cytidine triphosphate synthetase</fullName>
        <shortName evidence="1">CTP synthetase</shortName>
        <shortName evidence="1">CTPS</shortName>
    </alternativeName>
    <alternativeName>
        <fullName evidence="1">UTP--ammonia ligase</fullName>
    </alternativeName>
</protein>
<organism>
    <name type="scientific">Geotalea uraniireducens (strain Rf4)</name>
    <name type="common">Geobacter uraniireducens</name>
    <dbReference type="NCBI Taxonomy" id="351605"/>
    <lineage>
        <taxon>Bacteria</taxon>
        <taxon>Pseudomonadati</taxon>
        <taxon>Thermodesulfobacteriota</taxon>
        <taxon>Desulfuromonadia</taxon>
        <taxon>Geobacterales</taxon>
        <taxon>Geobacteraceae</taxon>
        <taxon>Geotalea</taxon>
    </lineage>
</organism>
<gene>
    <name evidence="1" type="primary">pyrG</name>
    <name type="ordered locus">Gura_2979</name>
</gene>
<proteinExistence type="inferred from homology"/>
<evidence type="ECO:0000255" key="1">
    <source>
        <dbReference type="HAMAP-Rule" id="MF_01227"/>
    </source>
</evidence>
<feature type="chain" id="PRO_1000139464" description="CTP synthase">
    <location>
        <begin position="1"/>
        <end position="534"/>
    </location>
</feature>
<feature type="domain" description="Glutamine amidotransferase type-1" evidence="1">
    <location>
        <begin position="292"/>
        <end position="534"/>
    </location>
</feature>
<feature type="region of interest" description="Amidoligase domain" evidence="1">
    <location>
        <begin position="1"/>
        <end position="266"/>
    </location>
</feature>
<feature type="active site" description="Nucleophile; for glutamine hydrolysis" evidence="1">
    <location>
        <position position="381"/>
    </location>
</feature>
<feature type="active site" evidence="1">
    <location>
        <position position="507"/>
    </location>
</feature>
<feature type="active site" evidence="1">
    <location>
        <position position="509"/>
    </location>
</feature>
<feature type="binding site" evidence="1">
    <location>
        <position position="14"/>
    </location>
    <ligand>
        <name>CTP</name>
        <dbReference type="ChEBI" id="CHEBI:37563"/>
        <note>allosteric inhibitor</note>
    </ligand>
</feature>
<feature type="binding site" evidence="1">
    <location>
        <position position="14"/>
    </location>
    <ligand>
        <name>UTP</name>
        <dbReference type="ChEBI" id="CHEBI:46398"/>
    </ligand>
</feature>
<feature type="binding site" evidence="1">
    <location>
        <begin position="15"/>
        <end position="20"/>
    </location>
    <ligand>
        <name>ATP</name>
        <dbReference type="ChEBI" id="CHEBI:30616"/>
    </ligand>
</feature>
<feature type="binding site" evidence="1">
    <location>
        <position position="72"/>
    </location>
    <ligand>
        <name>ATP</name>
        <dbReference type="ChEBI" id="CHEBI:30616"/>
    </ligand>
</feature>
<feature type="binding site" evidence="1">
    <location>
        <position position="72"/>
    </location>
    <ligand>
        <name>Mg(2+)</name>
        <dbReference type="ChEBI" id="CHEBI:18420"/>
    </ligand>
</feature>
<feature type="binding site" evidence="1">
    <location>
        <position position="140"/>
    </location>
    <ligand>
        <name>Mg(2+)</name>
        <dbReference type="ChEBI" id="CHEBI:18420"/>
    </ligand>
</feature>
<feature type="binding site" evidence="1">
    <location>
        <begin position="147"/>
        <end position="149"/>
    </location>
    <ligand>
        <name>CTP</name>
        <dbReference type="ChEBI" id="CHEBI:37563"/>
        <note>allosteric inhibitor</note>
    </ligand>
</feature>
<feature type="binding site" evidence="1">
    <location>
        <begin position="187"/>
        <end position="192"/>
    </location>
    <ligand>
        <name>CTP</name>
        <dbReference type="ChEBI" id="CHEBI:37563"/>
        <note>allosteric inhibitor</note>
    </ligand>
</feature>
<feature type="binding site" evidence="1">
    <location>
        <begin position="187"/>
        <end position="192"/>
    </location>
    <ligand>
        <name>UTP</name>
        <dbReference type="ChEBI" id="CHEBI:46398"/>
    </ligand>
</feature>
<feature type="binding site" evidence="1">
    <location>
        <position position="223"/>
    </location>
    <ligand>
        <name>CTP</name>
        <dbReference type="ChEBI" id="CHEBI:37563"/>
        <note>allosteric inhibitor</note>
    </ligand>
</feature>
<feature type="binding site" evidence="1">
    <location>
        <position position="223"/>
    </location>
    <ligand>
        <name>UTP</name>
        <dbReference type="ChEBI" id="CHEBI:46398"/>
    </ligand>
</feature>
<feature type="binding site" evidence="1">
    <location>
        <position position="354"/>
    </location>
    <ligand>
        <name>L-glutamine</name>
        <dbReference type="ChEBI" id="CHEBI:58359"/>
    </ligand>
</feature>
<feature type="binding site" evidence="1">
    <location>
        <begin position="382"/>
        <end position="385"/>
    </location>
    <ligand>
        <name>L-glutamine</name>
        <dbReference type="ChEBI" id="CHEBI:58359"/>
    </ligand>
</feature>
<feature type="binding site" evidence="1">
    <location>
        <position position="405"/>
    </location>
    <ligand>
        <name>L-glutamine</name>
        <dbReference type="ChEBI" id="CHEBI:58359"/>
    </ligand>
</feature>
<feature type="binding site" evidence="1">
    <location>
        <position position="462"/>
    </location>
    <ligand>
        <name>L-glutamine</name>
        <dbReference type="ChEBI" id="CHEBI:58359"/>
    </ligand>
</feature>
<keyword id="KW-0067">ATP-binding</keyword>
<keyword id="KW-0315">Glutamine amidotransferase</keyword>
<keyword id="KW-0436">Ligase</keyword>
<keyword id="KW-0460">Magnesium</keyword>
<keyword id="KW-0479">Metal-binding</keyword>
<keyword id="KW-0547">Nucleotide-binding</keyword>
<keyword id="KW-0665">Pyrimidine biosynthesis</keyword>
<keyword id="KW-1185">Reference proteome</keyword>
<comment type="function">
    <text evidence="1">Catalyzes the ATP-dependent amination of UTP to CTP with either L-glutamine or ammonia as the source of nitrogen. Regulates intracellular CTP levels through interactions with the four ribonucleotide triphosphates.</text>
</comment>
<comment type="catalytic activity">
    <reaction evidence="1">
        <text>UTP + L-glutamine + ATP + H2O = CTP + L-glutamate + ADP + phosphate + 2 H(+)</text>
        <dbReference type="Rhea" id="RHEA:26426"/>
        <dbReference type="ChEBI" id="CHEBI:15377"/>
        <dbReference type="ChEBI" id="CHEBI:15378"/>
        <dbReference type="ChEBI" id="CHEBI:29985"/>
        <dbReference type="ChEBI" id="CHEBI:30616"/>
        <dbReference type="ChEBI" id="CHEBI:37563"/>
        <dbReference type="ChEBI" id="CHEBI:43474"/>
        <dbReference type="ChEBI" id="CHEBI:46398"/>
        <dbReference type="ChEBI" id="CHEBI:58359"/>
        <dbReference type="ChEBI" id="CHEBI:456216"/>
        <dbReference type="EC" id="6.3.4.2"/>
    </reaction>
</comment>
<comment type="catalytic activity">
    <reaction evidence="1">
        <text>L-glutamine + H2O = L-glutamate + NH4(+)</text>
        <dbReference type="Rhea" id="RHEA:15889"/>
        <dbReference type="ChEBI" id="CHEBI:15377"/>
        <dbReference type="ChEBI" id="CHEBI:28938"/>
        <dbReference type="ChEBI" id="CHEBI:29985"/>
        <dbReference type="ChEBI" id="CHEBI:58359"/>
    </reaction>
</comment>
<comment type="catalytic activity">
    <reaction evidence="1">
        <text>UTP + NH4(+) + ATP = CTP + ADP + phosphate + 2 H(+)</text>
        <dbReference type="Rhea" id="RHEA:16597"/>
        <dbReference type="ChEBI" id="CHEBI:15378"/>
        <dbReference type="ChEBI" id="CHEBI:28938"/>
        <dbReference type="ChEBI" id="CHEBI:30616"/>
        <dbReference type="ChEBI" id="CHEBI:37563"/>
        <dbReference type="ChEBI" id="CHEBI:43474"/>
        <dbReference type="ChEBI" id="CHEBI:46398"/>
        <dbReference type="ChEBI" id="CHEBI:456216"/>
    </reaction>
</comment>
<comment type="activity regulation">
    <text evidence="1">Allosterically activated by GTP, when glutamine is the substrate; GTP has no effect on the reaction when ammonia is the substrate. The allosteric effector GTP functions by stabilizing the protein conformation that binds the tetrahedral intermediate(s) formed during glutamine hydrolysis. Inhibited by the product CTP, via allosteric rather than competitive inhibition.</text>
</comment>
<comment type="pathway">
    <text evidence="1">Pyrimidine metabolism; CTP biosynthesis via de novo pathway; CTP from UDP: step 2/2.</text>
</comment>
<comment type="subunit">
    <text evidence="1">Homotetramer.</text>
</comment>
<comment type="miscellaneous">
    <text evidence="1">CTPSs have evolved a hybrid strategy for distinguishing between UTP and CTP. The overlapping regions of the product feedback inhibitory and substrate sites recognize a common feature in both compounds, the triphosphate moiety. To differentiate isosteric substrate and product pyrimidine rings, an additional pocket far from the expected kinase/ligase catalytic site, specifically recognizes the cytosine and ribose portions of the product inhibitor.</text>
</comment>
<comment type="similarity">
    <text evidence="1">Belongs to the CTP synthase family.</text>
</comment>
<reference key="1">
    <citation type="submission" date="2007-05" db="EMBL/GenBank/DDBJ databases">
        <title>Complete sequence of Geobacter uraniireducens Rf4.</title>
        <authorList>
            <consortium name="US DOE Joint Genome Institute"/>
            <person name="Copeland A."/>
            <person name="Lucas S."/>
            <person name="Lapidus A."/>
            <person name="Barry K."/>
            <person name="Detter J.C."/>
            <person name="Glavina del Rio T."/>
            <person name="Hammon N."/>
            <person name="Israni S."/>
            <person name="Dalin E."/>
            <person name="Tice H."/>
            <person name="Pitluck S."/>
            <person name="Chertkov O."/>
            <person name="Brettin T."/>
            <person name="Bruce D."/>
            <person name="Han C."/>
            <person name="Schmutz J."/>
            <person name="Larimer F."/>
            <person name="Land M."/>
            <person name="Hauser L."/>
            <person name="Kyrpides N."/>
            <person name="Mikhailova N."/>
            <person name="Shelobolina E."/>
            <person name="Aklujkar M."/>
            <person name="Lovley D."/>
            <person name="Richardson P."/>
        </authorList>
    </citation>
    <scope>NUCLEOTIDE SEQUENCE [LARGE SCALE GENOMIC DNA]</scope>
    <source>
        <strain>ATCC BAA-1134 / JCM 13001 / Rf4</strain>
    </source>
</reference>